<name>RL22_BURO0</name>
<reference key="1">
    <citation type="submission" date="2008-02" db="EMBL/GenBank/DDBJ databases">
        <title>Complete sequence of chromosome 1 of Burkholderia cenocepacia MC0-3.</title>
        <authorList>
            <person name="Copeland A."/>
            <person name="Lucas S."/>
            <person name="Lapidus A."/>
            <person name="Barry K."/>
            <person name="Bruce D."/>
            <person name="Goodwin L."/>
            <person name="Glavina del Rio T."/>
            <person name="Dalin E."/>
            <person name="Tice H."/>
            <person name="Pitluck S."/>
            <person name="Chain P."/>
            <person name="Malfatti S."/>
            <person name="Shin M."/>
            <person name="Vergez L."/>
            <person name="Schmutz J."/>
            <person name="Larimer F."/>
            <person name="Land M."/>
            <person name="Hauser L."/>
            <person name="Kyrpides N."/>
            <person name="Mikhailova N."/>
            <person name="Tiedje J."/>
            <person name="Richardson P."/>
        </authorList>
    </citation>
    <scope>NUCLEOTIDE SEQUENCE [LARGE SCALE GENOMIC DNA]</scope>
    <source>
        <strain>MC0-3</strain>
    </source>
</reference>
<comment type="function">
    <text evidence="1">This protein binds specifically to 23S rRNA; its binding is stimulated by other ribosomal proteins, e.g. L4, L17, and L20. It is important during the early stages of 50S assembly. It makes multiple contacts with different domains of the 23S rRNA in the assembled 50S subunit and ribosome (By similarity).</text>
</comment>
<comment type="function">
    <text evidence="1">The globular domain of the protein is located near the polypeptide exit tunnel on the outside of the subunit, while an extended beta-hairpin is found that lines the wall of the exit tunnel in the center of the 70S ribosome.</text>
</comment>
<comment type="subunit">
    <text evidence="1">Part of the 50S ribosomal subunit.</text>
</comment>
<comment type="similarity">
    <text evidence="1">Belongs to the universal ribosomal protein uL22 family.</text>
</comment>
<sequence length="109" mass="11816">MEVKAIHRGARISAQKTRLVADQIRGLPVDKALNVLTFSPKKAAGIVKKVVLSAIANAEHNEGADIDELKIKSIYVDKAASLKRFTARAKGRGNRIEKQSCHITVTVGN</sequence>
<organism>
    <name type="scientific">Burkholderia orbicola (strain MC0-3)</name>
    <dbReference type="NCBI Taxonomy" id="406425"/>
    <lineage>
        <taxon>Bacteria</taxon>
        <taxon>Pseudomonadati</taxon>
        <taxon>Pseudomonadota</taxon>
        <taxon>Betaproteobacteria</taxon>
        <taxon>Burkholderiales</taxon>
        <taxon>Burkholderiaceae</taxon>
        <taxon>Burkholderia</taxon>
        <taxon>Burkholderia cepacia complex</taxon>
        <taxon>Burkholderia orbicola</taxon>
    </lineage>
</organism>
<dbReference type="EMBL" id="CP000958">
    <property type="protein sequence ID" value="ACA89512.1"/>
    <property type="molecule type" value="Genomic_DNA"/>
</dbReference>
<dbReference type="RefSeq" id="WP_004199272.1">
    <property type="nucleotide sequence ID" value="NC_010508.1"/>
</dbReference>
<dbReference type="SMR" id="B1JU27"/>
<dbReference type="GeneID" id="98107155"/>
<dbReference type="KEGG" id="bcm:Bcenmc03_0332"/>
<dbReference type="HOGENOM" id="CLU_083987_3_3_4"/>
<dbReference type="Proteomes" id="UP000002169">
    <property type="component" value="Chromosome 1"/>
</dbReference>
<dbReference type="GO" id="GO:0022625">
    <property type="term" value="C:cytosolic large ribosomal subunit"/>
    <property type="evidence" value="ECO:0007669"/>
    <property type="project" value="TreeGrafter"/>
</dbReference>
<dbReference type="GO" id="GO:0019843">
    <property type="term" value="F:rRNA binding"/>
    <property type="evidence" value="ECO:0007669"/>
    <property type="project" value="UniProtKB-UniRule"/>
</dbReference>
<dbReference type="GO" id="GO:0003735">
    <property type="term" value="F:structural constituent of ribosome"/>
    <property type="evidence" value="ECO:0007669"/>
    <property type="project" value="InterPro"/>
</dbReference>
<dbReference type="GO" id="GO:0006412">
    <property type="term" value="P:translation"/>
    <property type="evidence" value="ECO:0007669"/>
    <property type="project" value="UniProtKB-UniRule"/>
</dbReference>
<dbReference type="CDD" id="cd00336">
    <property type="entry name" value="Ribosomal_L22"/>
    <property type="match status" value="1"/>
</dbReference>
<dbReference type="FunFam" id="3.90.470.10:FF:000001">
    <property type="entry name" value="50S ribosomal protein L22"/>
    <property type="match status" value="1"/>
</dbReference>
<dbReference type="Gene3D" id="3.90.470.10">
    <property type="entry name" value="Ribosomal protein L22/L17"/>
    <property type="match status" value="1"/>
</dbReference>
<dbReference type="HAMAP" id="MF_01331_B">
    <property type="entry name" value="Ribosomal_uL22_B"/>
    <property type="match status" value="1"/>
</dbReference>
<dbReference type="InterPro" id="IPR001063">
    <property type="entry name" value="Ribosomal_uL22"/>
</dbReference>
<dbReference type="InterPro" id="IPR005727">
    <property type="entry name" value="Ribosomal_uL22_bac/chlpt-type"/>
</dbReference>
<dbReference type="InterPro" id="IPR047867">
    <property type="entry name" value="Ribosomal_uL22_bac/org-type"/>
</dbReference>
<dbReference type="InterPro" id="IPR018260">
    <property type="entry name" value="Ribosomal_uL22_CS"/>
</dbReference>
<dbReference type="InterPro" id="IPR036394">
    <property type="entry name" value="Ribosomal_uL22_sf"/>
</dbReference>
<dbReference type="NCBIfam" id="TIGR01044">
    <property type="entry name" value="rplV_bact"/>
    <property type="match status" value="1"/>
</dbReference>
<dbReference type="PANTHER" id="PTHR13501">
    <property type="entry name" value="CHLOROPLAST 50S RIBOSOMAL PROTEIN L22-RELATED"/>
    <property type="match status" value="1"/>
</dbReference>
<dbReference type="PANTHER" id="PTHR13501:SF8">
    <property type="entry name" value="LARGE RIBOSOMAL SUBUNIT PROTEIN UL22M"/>
    <property type="match status" value="1"/>
</dbReference>
<dbReference type="Pfam" id="PF00237">
    <property type="entry name" value="Ribosomal_L22"/>
    <property type="match status" value="1"/>
</dbReference>
<dbReference type="SUPFAM" id="SSF54843">
    <property type="entry name" value="Ribosomal protein L22"/>
    <property type="match status" value="1"/>
</dbReference>
<dbReference type="PROSITE" id="PS00464">
    <property type="entry name" value="RIBOSOMAL_L22"/>
    <property type="match status" value="1"/>
</dbReference>
<proteinExistence type="inferred from homology"/>
<evidence type="ECO:0000255" key="1">
    <source>
        <dbReference type="HAMAP-Rule" id="MF_01331"/>
    </source>
</evidence>
<evidence type="ECO:0000305" key="2"/>
<keyword id="KW-0687">Ribonucleoprotein</keyword>
<keyword id="KW-0689">Ribosomal protein</keyword>
<keyword id="KW-0694">RNA-binding</keyword>
<keyword id="KW-0699">rRNA-binding</keyword>
<accession>B1JU27</accession>
<feature type="chain" id="PRO_1000142239" description="Large ribosomal subunit protein uL22">
    <location>
        <begin position="1"/>
        <end position="109"/>
    </location>
</feature>
<protein>
    <recommendedName>
        <fullName evidence="1">Large ribosomal subunit protein uL22</fullName>
    </recommendedName>
    <alternativeName>
        <fullName evidence="2">50S ribosomal protein L22</fullName>
    </alternativeName>
</protein>
<gene>
    <name evidence="1" type="primary">rplV</name>
    <name type="ordered locus">Bcenmc03_0332</name>
</gene>